<keyword id="KW-0687">Ribonucleoprotein</keyword>
<keyword id="KW-0689">Ribosomal protein</keyword>
<keyword id="KW-0694">RNA-binding</keyword>
<keyword id="KW-0699">rRNA-binding</keyword>
<feature type="chain" id="PRO_1000142318" description="Large ribosomal subunit protein uL22">
    <location>
        <begin position="1"/>
        <end position="114"/>
    </location>
</feature>
<comment type="function">
    <text evidence="1">This protein binds specifically to 23S rRNA; its binding is stimulated by other ribosomal proteins, e.g. L4, L17, and L20. It is important during the early stages of 50S assembly. It makes multiple contacts with different domains of the 23S rRNA in the assembled 50S subunit and ribosome (By similarity).</text>
</comment>
<comment type="function">
    <text evidence="1">The globular domain of the protein is located near the polypeptide exit tunnel on the outside of the subunit, while an extended beta-hairpin is found that lines the wall of the exit tunnel in the center of the 70S ribosome.</text>
</comment>
<comment type="subunit">
    <text evidence="1">Part of the 50S ribosomal subunit.</text>
</comment>
<comment type="similarity">
    <text evidence="1">Belongs to the universal ribosomal protein uL22 family.</text>
</comment>
<proteinExistence type="inferred from homology"/>
<reference key="1">
    <citation type="journal article" date="2008" name="J. Bacteriol.">
        <title>Genome sequence of a nephritogenic and highly transformable M49 strain of Streptococcus pyogenes.</title>
        <authorList>
            <person name="McShan W.M."/>
            <person name="Ferretti J.J."/>
            <person name="Karasawa T."/>
            <person name="Suvorov A.N."/>
            <person name="Lin S."/>
            <person name="Qin B."/>
            <person name="Jia H."/>
            <person name="Kenton S."/>
            <person name="Najar F."/>
            <person name="Wu H."/>
            <person name="Scott J."/>
            <person name="Roe B.A."/>
            <person name="Savic D.J."/>
        </authorList>
    </citation>
    <scope>NUCLEOTIDE SEQUENCE [LARGE SCALE GENOMIC DNA]</scope>
    <source>
        <strain>NZ131</strain>
    </source>
</reference>
<gene>
    <name evidence="1" type="primary">rplV</name>
    <name type="ordered locus">Spy49_0052</name>
</gene>
<organism>
    <name type="scientific">Streptococcus pyogenes serotype M49 (strain NZ131)</name>
    <dbReference type="NCBI Taxonomy" id="471876"/>
    <lineage>
        <taxon>Bacteria</taxon>
        <taxon>Bacillati</taxon>
        <taxon>Bacillota</taxon>
        <taxon>Bacilli</taxon>
        <taxon>Lactobacillales</taxon>
        <taxon>Streptococcaceae</taxon>
        <taxon>Streptococcus</taxon>
    </lineage>
</organism>
<dbReference type="EMBL" id="CP000829">
    <property type="protein sequence ID" value="ACI60409.1"/>
    <property type="molecule type" value="Genomic_DNA"/>
</dbReference>
<dbReference type="SMR" id="B5XJ41"/>
<dbReference type="KEGG" id="soz:Spy49_0052"/>
<dbReference type="HOGENOM" id="CLU_083987_3_3_9"/>
<dbReference type="Proteomes" id="UP000001039">
    <property type="component" value="Chromosome"/>
</dbReference>
<dbReference type="GO" id="GO:0022625">
    <property type="term" value="C:cytosolic large ribosomal subunit"/>
    <property type="evidence" value="ECO:0007669"/>
    <property type="project" value="TreeGrafter"/>
</dbReference>
<dbReference type="GO" id="GO:0019843">
    <property type="term" value="F:rRNA binding"/>
    <property type="evidence" value="ECO:0007669"/>
    <property type="project" value="UniProtKB-UniRule"/>
</dbReference>
<dbReference type="GO" id="GO:0003735">
    <property type="term" value="F:structural constituent of ribosome"/>
    <property type="evidence" value="ECO:0007669"/>
    <property type="project" value="InterPro"/>
</dbReference>
<dbReference type="GO" id="GO:0006412">
    <property type="term" value="P:translation"/>
    <property type="evidence" value="ECO:0007669"/>
    <property type="project" value="UniProtKB-UniRule"/>
</dbReference>
<dbReference type="CDD" id="cd00336">
    <property type="entry name" value="Ribosomal_L22"/>
    <property type="match status" value="1"/>
</dbReference>
<dbReference type="FunFam" id="3.90.470.10:FF:000001">
    <property type="entry name" value="50S ribosomal protein L22"/>
    <property type="match status" value="1"/>
</dbReference>
<dbReference type="Gene3D" id="3.90.470.10">
    <property type="entry name" value="Ribosomal protein L22/L17"/>
    <property type="match status" value="1"/>
</dbReference>
<dbReference type="HAMAP" id="MF_01331_B">
    <property type="entry name" value="Ribosomal_uL22_B"/>
    <property type="match status" value="1"/>
</dbReference>
<dbReference type="InterPro" id="IPR001063">
    <property type="entry name" value="Ribosomal_uL22"/>
</dbReference>
<dbReference type="InterPro" id="IPR005727">
    <property type="entry name" value="Ribosomal_uL22_bac/chlpt-type"/>
</dbReference>
<dbReference type="InterPro" id="IPR047867">
    <property type="entry name" value="Ribosomal_uL22_bac/org-type"/>
</dbReference>
<dbReference type="InterPro" id="IPR018260">
    <property type="entry name" value="Ribosomal_uL22_CS"/>
</dbReference>
<dbReference type="InterPro" id="IPR036394">
    <property type="entry name" value="Ribosomal_uL22_sf"/>
</dbReference>
<dbReference type="NCBIfam" id="TIGR01044">
    <property type="entry name" value="rplV_bact"/>
    <property type="match status" value="1"/>
</dbReference>
<dbReference type="PANTHER" id="PTHR13501">
    <property type="entry name" value="CHLOROPLAST 50S RIBOSOMAL PROTEIN L22-RELATED"/>
    <property type="match status" value="1"/>
</dbReference>
<dbReference type="PANTHER" id="PTHR13501:SF8">
    <property type="entry name" value="LARGE RIBOSOMAL SUBUNIT PROTEIN UL22M"/>
    <property type="match status" value="1"/>
</dbReference>
<dbReference type="Pfam" id="PF00237">
    <property type="entry name" value="Ribosomal_L22"/>
    <property type="match status" value="1"/>
</dbReference>
<dbReference type="SUPFAM" id="SSF54843">
    <property type="entry name" value="Ribosomal protein L22"/>
    <property type="match status" value="1"/>
</dbReference>
<dbReference type="PROSITE" id="PS00464">
    <property type="entry name" value="RIBOSOMAL_L22"/>
    <property type="match status" value="1"/>
</dbReference>
<accession>B5XJ41</accession>
<protein>
    <recommendedName>
        <fullName evidence="1">Large ribosomal subunit protein uL22</fullName>
    </recommendedName>
    <alternativeName>
        <fullName evidence="2">50S ribosomal protein L22</fullName>
    </alternativeName>
</protein>
<name>RL22_STRPZ</name>
<evidence type="ECO:0000255" key="1">
    <source>
        <dbReference type="HAMAP-Rule" id="MF_01331"/>
    </source>
</evidence>
<evidence type="ECO:0000305" key="2"/>
<sequence>MAEITSAKAMARTVRVSPRKTRLVLDLIRGKKVADAIAILKFTPNKAARVIEKTLNSAIANAENNFGLEKANLVVSETFANEGPTMKRFRPRAKGSASPINKRTTHVTVVVSEK</sequence>